<name>ATPD_PERMH</name>
<comment type="function">
    <text evidence="1">F(1)F(0) ATP synthase produces ATP from ADP in the presence of a proton or sodium gradient. F-type ATPases consist of two structural domains, F(1) containing the extramembraneous catalytic core and F(0) containing the membrane proton channel, linked together by a central stalk and a peripheral stalk. During catalysis, ATP synthesis in the catalytic domain of F(1) is coupled via a rotary mechanism of the central stalk subunits to proton translocation.</text>
</comment>
<comment type="function">
    <text evidence="1">This protein is part of the stalk that links CF(0) to CF(1). It either transmits conformational changes from CF(0) to CF(1) or is implicated in proton conduction.</text>
</comment>
<comment type="subunit">
    <text evidence="1">F-type ATPases have 2 components, F(1) - the catalytic core - and F(0) - the membrane proton channel. F(1) has five subunits: alpha(3), beta(3), gamma(1), delta(1), epsilon(1). F(0) has three main subunits: a(1), b(2) and c(10-14). The alpha and beta chains form an alternating ring which encloses part of the gamma chain. F(1) is attached to F(0) by a central stalk formed by the gamma and epsilon chains, while a peripheral stalk is formed by the delta and b chains.</text>
</comment>
<comment type="subcellular location">
    <subcellularLocation>
        <location evidence="1">Cell inner membrane</location>
        <topology evidence="1">Peripheral membrane protein</topology>
    </subcellularLocation>
</comment>
<comment type="similarity">
    <text evidence="1">Belongs to the ATPase delta chain family.</text>
</comment>
<organism>
    <name type="scientific">Persephonella marina (strain DSM 14350 / EX-H1)</name>
    <dbReference type="NCBI Taxonomy" id="123214"/>
    <lineage>
        <taxon>Bacteria</taxon>
        <taxon>Pseudomonadati</taxon>
        <taxon>Aquificota</taxon>
        <taxon>Aquificia</taxon>
        <taxon>Aquificales</taxon>
        <taxon>Hydrogenothermaceae</taxon>
        <taxon>Persephonella</taxon>
    </lineage>
</organism>
<evidence type="ECO:0000255" key="1">
    <source>
        <dbReference type="HAMAP-Rule" id="MF_01416"/>
    </source>
</evidence>
<accession>C0QTG4</accession>
<gene>
    <name evidence="1" type="primary">atpH</name>
    <name type="ordered locus">PERMA_0181</name>
</gene>
<dbReference type="EMBL" id="CP001230">
    <property type="protein sequence ID" value="ACO04148.1"/>
    <property type="molecule type" value="Genomic_DNA"/>
</dbReference>
<dbReference type="RefSeq" id="WP_012676386.1">
    <property type="nucleotide sequence ID" value="NC_012440.1"/>
</dbReference>
<dbReference type="SMR" id="C0QTG4"/>
<dbReference type="STRING" id="123214.PERMA_0181"/>
<dbReference type="PaxDb" id="123214-PERMA_0181"/>
<dbReference type="KEGG" id="pmx:PERMA_0181"/>
<dbReference type="eggNOG" id="COG0712">
    <property type="taxonomic scope" value="Bacteria"/>
</dbReference>
<dbReference type="HOGENOM" id="CLU_085114_1_1_0"/>
<dbReference type="OrthoDB" id="9802471at2"/>
<dbReference type="Proteomes" id="UP000001366">
    <property type="component" value="Chromosome"/>
</dbReference>
<dbReference type="GO" id="GO:0005886">
    <property type="term" value="C:plasma membrane"/>
    <property type="evidence" value="ECO:0007669"/>
    <property type="project" value="UniProtKB-SubCell"/>
</dbReference>
<dbReference type="GO" id="GO:0045259">
    <property type="term" value="C:proton-transporting ATP synthase complex"/>
    <property type="evidence" value="ECO:0007669"/>
    <property type="project" value="UniProtKB-KW"/>
</dbReference>
<dbReference type="GO" id="GO:0046933">
    <property type="term" value="F:proton-transporting ATP synthase activity, rotational mechanism"/>
    <property type="evidence" value="ECO:0007669"/>
    <property type="project" value="UniProtKB-UniRule"/>
</dbReference>
<dbReference type="Gene3D" id="1.10.520.20">
    <property type="entry name" value="N-terminal domain of the delta subunit of the F1F0-ATP synthase"/>
    <property type="match status" value="1"/>
</dbReference>
<dbReference type="HAMAP" id="MF_01416">
    <property type="entry name" value="ATP_synth_delta_bact"/>
    <property type="match status" value="1"/>
</dbReference>
<dbReference type="InterPro" id="IPR026015">
    <property type="entry name" value="ATP_synth_OSCP/delta_N_sf"/>
</dbReference>
<dbReference type="InterPro" id="IPR000711">
    <property type="entry name" value="ATPase_OSCP/dsu"/>
</dbReference>
<dbReference type="NCBIfam" id="TIGR01145">
    <property type="entry name" value="ATP_synt_delta"/>
    <property type="match status" value="1"/>
</dbReference>
<dbReference type="PANTHER" id="PTHR11910">
    <property type="entry name" value="ATP SYNTHASE DELTA CHAIN"/>
    <property type="match status" value="1"/>
</dbReference>
<dbReference type="Pfam" id="PF00213">
    <property type="entry name" value="OSCP"/>
    <property type="match status" value="1"/>
</dbReference>
<dbReference type="SUPFAM" id="SSF47928">
    <property type="entry name" value="N-terminal domain of the delta subunit of the F1F0-ATP synthase"/>
    <property type="match status" value="1"/>
</dbReference>
<dbReference type="SUPFAM" id="SSF160527">
    <property type="entry name" value="V-type ATPase subunit E-like"/>
    <property type="match status" value="1"/>
</dbReference>
<feature type="chain" id="PRO_0000382139" description="ATP synthase subunit delta">
    <location>
        <begin position="1"/>
        <end position="182"/>
    </location>
</feature>
<keyword id="KW-0066">ATP synthesis</keyword>
<keyword id="KW-0997">Cell inner membrane</keyword>
<keyword id="KW-1003">Cell membrane</keyword>
<keyword id="KW-0139">CF(1)</keyword>
<keyword id="KW-0375">Hydrogen ion transport</keyword>
<keyword id="KW-0406">Ion transport</keyword>
<keyword id="KW-0472">Membrane</keyword>
<keyword id="KW-1185">Reference proteome</keyword>
<keyword id="KW-0813">Transport</keyword>
<proteinExistence type="inferred from homology"/>
<protein>
    <recommendedName>
        <fullName evidence="1">ATP synthase subunit delta</fullName>
    </recommendedName>
    <alternativeName>
        <fullName evidence="1">ATP synthase F(1) sector subunit delta</fullName>
    </alternativeName>
    <alternativeName>
        <fullName evidence="1">F-type ATPase subunit delta</fullName>
        <shortName evidence="1">F-ATPase subunit delta</shortName>
    </alternativeName>
</protein>
<reference key="1">
    <citation type="journal article" date="2009" name="J. Bacteriol.">
        <title>Complete and draft genome sequences of six members of the Aquificales.</title>
        <authorList>
            <person name="Reysenbach A.-L."/>
            <person name="Hamamura N."/>
            <person name="Podar M."/>
            <person name="Griffiths E."/>
            <person name="Ferreira S."/>
            <person name="Hochstein R."/>
            <person name="Heidelberg J."/>
            <person name="Johnson J."/>
            <person name="Mead D."/>
            <person name="Pohorille A."/>
            <person name="Sarmiento M."/>
            <person name="Schweighofer K."/>
            <person name="Seshadri R."/>
            <person name="Voytek M.A."/>
        </authorList>
    </citation>
    <scope>NUCLEOTIDE SEQUENCE [LARGE SCALE GENOMIC DNA]</scope>
    <source>
        <strain>DSM 14350 / EX-H1</strain>
    </source>
</reference>
<sequence length="182" mass="20722">MKIDKKSLKRIVKVLLNKVPKEEAALIKVSDDLTLIQEIYRKDKDFRNFILNPSAPYEDKKKIIDSLSEKAGLDPVVKEALEYIVKTNKGNLLKIIGDEFRFEVEKFFATVKGEIITAYPIDEETINSVKEVVEKKLGKKVEFDIKQDPSIIGGIIVKAGSYILDSSLKTYLQKLEQQLTAF</sequence>